<proteinExistence type="inferred from homology"/>
<reference key="1">
    <citation type="journal article" date="2007" name="PLoS Genet.">
        <title>Patterns and implications of gene gain and loss in the evolution of Prochlorococcus.</title>
        <authorList>
            <person name="Kettler G.C."/>
            <person name="Martiny A.C."/>
            <person name="Huang K."/>
            <person name="Zucker J."/>
            <person name="Coleman M.L."/>
            <person name="Rodrigue S."/>
            <person name="Chen F."/>
            <person name="Lapidus A."/>
            <person name="Ferriera S."/>
            <person name="Johnson J."/>
            <person name="Steglich C."/>
            <person name="Church G.M."/>
            <person name="Richardson P."/>
            <person name="Chisholm S.W."/>
        </authorList>
    </citation>
    <scope>NUCLEOTIDE SEQUENCE [LARGE SCALE GENOMIC DNA]</scope>
    <source>
        <strain>AS9601</strain>
    </source>
</reference>
<evidence type="ECO:0000255" key="1">
    <source>
        <dbReference type="HAMAP-Rule" id="MF_00406"/>
    </source>
</evidence>
<comment type="function">
    <text evidence="1">Involved in unsaturated fatty acids biosynthesis. Catalyzes the dehydration of short chain beta-hydroxyacyl-ACPs and long chain saturated and unsaturated beta-hydroxyacyl-ACPs.</text>
</comment>
<comment type="catalytic activity">
    <reaction evidence="1">
        <text>a (3R)-hydroxyacyl-[ACP] = a (2E)-enoyl-[ACP] + H2O</text>
        <dbReference type="Rhea" id="RHEA:13097"/>
        <dbReference type="Rhea" id="RHEA-COMP:9925"/>
        <dbReference type="Rhea" id="RHEA-COMP:9945"/>
        <dbReference type="ChEBI" id="CHEBI:15377"/>
        <dbReference type="ChEBI" id="CHEBI:78784"/>
        <dbReference type="ChEBI" id="CHEBI:78827"/>
        <dbReference type="EC" id="4.2.1.59"/>
    </reaction>
</comment>
<comment type="subcellular location">
    <subcellularLocation>
        <location evidence="1">Cytoplasm</location>
    </subcellularLocation>
</comment>
<comment type="similarity">
    <text evidence="1">Belongs to the thioester dehydratase family. FabZ subfamily.</text>
</comment>
<sequence length="152" mass="16764">MEKKLSSENNQLSSENILGLLPHRYPFALVDKVIENIPGERAVAVKNVTINEPQFQGHFPERPLMPGVLIVESMAQVGGIIVTQMQNLPKGLFVFAGINNVKFRKPVVPGDQLIISCDLLSIKRQRFGKVKGEAHVDGKLVCSGELMFSLVD</sequence>
<name>FABZ_PROMS</name>
<accession>A2BSQ8</accession>
<dbReference type="EC" id="4.2.1.59" evidence="1"/>
<dbReference type="EMBL" id="CP000551">
    <property type="protein sequence ID" value="ABM70819.1"/>
    <property type="molecule type" value="Genomic_DNA"/>
</dbReference>
<dbReference type="RefSeq" id="WP_011818951.1">
    <property type="nucleotide sequence ID" value="NC_008816.1"/>
</dbReference>
<dbReference type="SMR" id="A2BSQ8"/>
<dbReference type="STRING" id="146891.A9601_15361"/>
<dbReference type="KEGG" id="pmb:A9601_15361"/>
<dbReference type="eggNOG" id="COG0764">
    <property type="taxonomic scope" value="Bacteria"/>
</dbReference>
<dbReference type="HOGENOM" id="CLU_078912_1_1_3"/>
<dbReference type="OrthoDB" id="9772788at2"/>
<dbReference type="Proteomes" id="UP000002590">
    <property type="component" value="Chromosome"/>
</dbReference>
<dbReference type="GO" id="GO:0005737">
    <property type="term" value="C:cytoplasm"/>
    <property type="evidence" value="ECO:0007669"/>
    <property type="project" value="UniProtKB-SubCell"/>
</dbReference>
<dbReference type="GO" id="GO:0016020">
    <property type="term" value="C:membrane"/>
    <property type="evidence" value="ECO:0007669"/>
    <property type="project" value="GOC"/>
</dbReference>
<dbReference type="GO" id="GO:0019171">
    <property type="term" value="F:(3R)-hydroxyacyl-[acyl-carrier-protein] dehydratase activity"/>
    <property type="evidence" value="ECO:0007669"/>
    <property type="project" value="UniProtKB-EC"/>
</dbReference>
<dbReference type="GO" id="GO:0006633">
    <property type="term" value="P:fatty acid biosynthetic process"/>
    <property type="evidence" value="ECO:0007669"/>
    <property type="project" value="UniProtKB-UniRule"/>
</dbReference>
<dbReference type="GO" id="GO:0009245">
    <property type="term" value="P:lipid A biosynthetic process"/>
    <property type="evidence" value="ECO:0007669"/>
    <property type="project" value="UniProtKB-UniRule"/>
</dbReference>
<dbReference type="CDD" id="cd01288">
    <property type="entry name" value="FabZ"/>
    <property type="match status" value="1"/>
</dbReference>
<dbReference type="FunFam" id="3.10.129.10:FF:000001">
    <property type="entry name" value="3-hydroxyacyl-[acyl-carrier-protein] dehydratase FabZ"/>
    <property type="match status" value="1"/>
</dbReference>
<dbReference type="Gene3D" id="3.10.129.10">
    <property type="entry name" value="Hotdog Thioesterase"/>
    <property type="match status" value="1"/>
</dbReference>
<dbReference type="HAMAP" id="MF_00406">
    <property type="entry name" value="FabZ"/>
    <property type="match status" value="1"/>
</dbReference>
<dbReference type="InterPro" id="IPR013114">
    <property type="entry name" value="FabA_FabZ"/>
</dbReference>
<dbReference type="InterPro" id="IPR010084">
    <property type="entry name" value="FabZ"/>
</dbReference>
<dbReference type="InterPro" id="IPR029069">
    <property type="entry name" value="HotDog_dom_sf"/>
</dbReference>
<dbReference type="NCBIfam" id="TIGR01750">
    <property type="entry name" value="fabZ"/>
    <property type="match status" value="1"/>
</dbReference>
<dbReference type="NCBIfam" id="NF000582">
    <property type="entry name" value="PRK00006.1"/>
    <property type="match status" value="1"/>
</dbReference>
<dbReference type="PANTHER" id="PTHR30272">
    <property type="entry name" value="3-HYDROXYACYL-[ACYL-CARRIER-PROTEIN] DEHYDRATASE"/>
    <property type="match status" value="1"/>
</dbReference>
<dbReference type="PANTHER" id="PTHR30272:SF1">
    <property type="entry name" value="3-HYDROXYACYL-[ACYL-CARRIER-PROTEIN] DEHYDRATASE"/>
    <property type="match status" value="1"/>
</dbReference>
<dbReference type="Pfam" id="PF07977">
    <property type="entry name" value="FabA"/>
    <property type="match status" value="1"/>
</dbReference>
<dbReference type="SUPFAM" id="SSF54637">
    <property type="entry name" value="Thioesterase/thiol ester dehydrase-isomerase"/>
    <property type="match status" value="1"/>
</dbReference>
<organism>
    <name type="scientific">Prochlorococcus marinus (strain AS9601)</name>
    <dbReference type="NCBI Taxonomy" id="146891"/>
    <lineage>
        <taxon>Bacteria</taxon>
        <taxon>Bacillati</taxon>
        <taxon>Cyanobacteriota</taxon>
        <taxon>Cyanophyceae</taxon>
        <taxon>Synechococcales</taxon>
        <taxon>Prochlorococcaceae</taxon>
        <taxon>Prochlorococcus</taxon>
    </lineage>
</organism>
<gene>
    <name evidence="1" type="primary">fabZ</name>
    <name type="ordered locus">A9601_15361</name>
</gene>
<keyword id="KW-0963">Cytoplasm</keyword>
<keyword id="KW-0441">Lipid A biosynthesis</keyword>
<keyword id="KW-0444">Lipid biosynthesis</keyword>
<keyword id="KW-0443">Lipid metabolism</keyword>
<keyword id="KW-0456">Lyase</keyword>
<feature type="chain" id="PRO_0000301908" description="3-hydroxyacyl-[acyl-carrier-protein] dehydratase FabZ">
    <location>
        <begin position="1"/>
        <end position="152"/>
    </location>
</feature>
<feature type="active site" evidence="1">
    <location>
        <position position="58"/>
    </location>
</feature>
<protein>
    <recommendedName>
        <fullName evidence="1">3-hydroxyacyl-[acyl-carrier-protein] dehydratase FabZ</fullName>
        <ecNumber evidence="1">4.2.1.59</ecNumber>
    </recommendedName>
    <alternativeName>
        <fullName evidence="1">(3R)-hydroxymyristoyl-[acyl-carrier-protein] dehydratase</fullName>
        <shortName evidence="1">(3R)-hydroxymyristoyl-ACP dehydrase</shortName>
    </alternativeName>
    <alternativeName>
        <fullName evidence="1">Beta-hydroxyacyl-ACP dehydratase</fullName>
    </alternativeName>
</protein>